<organism>
    <name type="scientific">Haemophilus influenzae (strain 86-028NP)</name>
    <dbReference type="NCBI Taxonomy" id="281310"/>
    <lineage>
        <taxon>Bacteria</taxon>
        <taxon>Pseudomonadati</taxon>
        <taxon>Pseudomonadota</taxon>
        <taxon>Gammaproteobacteria</taxon>
        <taxon>Pasteurellales</taxon>
        <taxon>Pasteurellaceae</taxon>
        <taxon>Haemophilus</taxon>
    </lineage>
</organism>
<comment type="function">
    <text evidence="1">Catalyzes the attachment of valine to tRNA(Val). As ValRS can inadvertently accommodate and process structurally similar amino acids such as threonine, to avoid such errors, it has a 'posttransfer' editing activity that hydrolyzes mischarged Thr-tRNA(Val) in a tRNA-dependent manner.</text>
</comment>
<comment type="catalytic activity">
    <reaction evidence="1">
        <text>tRNA(Val) + L-valine + ATP = L-valyl-tRNA(Val) + AMP + diphosphate</text>
        <dbReference type="Rhea" id="RHEA:10704"/>
        <dbReference type="Rhea" id="RHEA-COMP:9672"/>
        <dbReference type="Rhea" id="RHEA-COMP:9708"/>
        <dbReference type="ChEBI" id="CHEBI:30616"/>
        <dbReference type="ChEBI" id="CHEBI:33019"/>
        <dbReference type="ChEBI" id="CHEBI:57762"/>
        <dbReference type="ChEBI" id="CHEBI:78442"/>
        <dbReference type="ChEBI" id="CHEBI:78537"/>
        <dbReference type="ChEBI" id="CHEBI:456215"/>
        <dbReference type="EC" id="6.1.1.9"/>
    </reaction>
</comment>
<comment type="subunit">
    <text evidence="1">Monomer.</text>
</comment>
<comment type="subcellular location">
    <subcellularLocation>
        <location evidence="1">Cytoplasm</location>
    </subcellularLocation>
</comment>
<comment type="domain">
    <text evidence="1">ValRS has two distinct active sites: one for aminoacylation and one for editing. The misactivated threonine is translocated from the active site to the editing site.</text>
</comment>
<comment type="domain">
    <text evidence="1">The C-terminal coiled-coil domain is crucial for aminoacylation activity.</text>
</comment>
<comment type="similarity">
    <text evidence="1">Belongs to the class-I aminoacyl-tRNA synthetase family. ValS type 1 subfamily.</text>
</comment>
<proteinExistence type="inferred from homology"/>
<sequence length="954" mass="108732">MTQKFEMADRFNPSAVEQALYQHWEESGYFKPSENENAPSYCIAIPPPNVTGSLHMGHAFQQTLMDTLIRFNRMEGHNTLWQAGTDHAGIATQMVVERKIAAEEGKTRHDYGREAFINKIWDWKAYSGGTISQQMRRLGNSIDWERERFTMDDGLSNAVKEVFVRLHEEGLIYRGKRLVNWDPKLHTAISDLEVENKESKGSLWHFRYPLANGAKTADGKDYLVVATTRPETMLGDTAVAVHPEDERYQSLIGKTVVLPLANREIPIIADEYVDREFGTGVVKITPAHDFNDYEVGKRHNLPMVNVLTLNANIRDEAEIIGTDGKPLAGYEATIPADYRGLERFAARKKIVADFEALGLLDEIKPHDLKVPYGDRGGVPIEPMLTDQWYVSVKPLADVAIKAVEDGEIQFVPKQYENLYFSWMRDIQDWCISRQLWWGHRIPAWYDAEGNVYVARNEEEVRSKYNLDSAVELKQDEDVLDTWFSSGLWTFSTLGWPEQTKELKMFHPTDVLITGFDIIFFWVARMIMFTMHFVKDENGKPQVPFKTVYVTGLIRDEQGQKMSKSKGNVLDPIDMIDGISLEDLLEKRTGNMMQPQLAEKIAKATRKEFADGIAAHGTDALRFTLAALASNGRDINWDMKRLEGYRNFCNKLWNASRFVLTNEKLDLSEGEIEFSLADRWIQSEFNRTVETFRNSLSQYRFDLCANAIYEFTWNQFCDWYLELTKPVFANGNAAQIRAASQTLVHVLEKLLRLAHPLIPFITEEIWQKVKGFVGITADSIMLQPFPQVEENGFDLEAEAEIEWLKEVIVAVRNIRAESNIAPSKGLDLLFRNLSAENAKILEKQTALLKAMAKLDNVQVLAANEAAPLAVAKLVGNAELLVPMAGFINKEAELARLTKEIEKYQNEVKRIENKLSNESFVAKAPEAVIAKEREKQAEYQSGLEKIQEQYKAIEAL</sequence>
<dbReference type="EC" id="6.1.1.9" evidence="1"/>
<dbReference type="EMBL" id="CP000057">
    <property type="protein sequence ID" value="AAX88543.1"/>
    <property type="molecule type" value="Genomic_DNA"/>
</dbReference>
<dbReference type="RefSeq" id="WP_011272624.1">
    <property type="nucleotide sequence ID" value="NC_007146.2"/>
</dbReference>
<dbReference type="SMR" id="Q4QKA4"/>
<dbReference type="KEGG" id="hit:NTHI1760"/>
<dbReference type="HOGENOM" id="CLU_001493_0_2_6"/>
<dbReference type="Proteomes" id="UP000002525">
    <property type="component" value="Chromosome"/>
</dbReference>
<dbReference type="GO" id="GO:0005829">
    <property type="term" value="C:cytosol"/>
    <property type="evidence" value="ECO:0007669"/>
    <property type="project" value="TreeGrafter"/>
</dbReference>
<dbReference type="GO" id="GO:0002161">
    <property type="term" value="F:aminoacyl-tRNA deacylase activity"/>
    <property type="evidence" value="ECO:0007669"/>
    <property type="project" value="InterPro"/>
</dbReference>
<dbReference type="GO" id="GO:0005524">
    <property type="term" value="F:ATP binding"/>
    <property type="evidence" value="ECO:0007669"/>
    <property type="project" value="UniProtKB-UniRule"/>
</dbReference>
<dbReference type="GO" id="GO:0004832">
    <property type="term" value="F:valine-tRNA ligase activity"/>
    <property type="evidence" value="ECO:0007669"/>
    <property type="project" value="UniProtKB-UniRule"/>
</dbReference>
<dbReference type="GO" id="GO:0006438">
    <property type="term" value="P:valyl-tRNA aminoacylation"/>
    <property type="evidence" value="ECO:0007669"/>
    <property type="project" value="UniProtKB-UniRule"/>
</dbReference>
<dbReference type="CDD" id="cd07962">
    <property type="entry name" value="Anticodon_Ia_Val"/>
    <property type="match status" value="1"/>
</dbReference>
<dbReference type="CDD" id="cd00817">
    <property type="entry name" value="ValRS_core"/>
    <property type="match status" value="1"/>
</dbReference>
<dbReference type="FunFam" id="1.10.287.380:FF:000001">
    <property type="entry name" value="Valine--tRNA ligase"/>
    <property type="match status" value="1"/>
</dbReference>
<dbReference type="FunFam" id="1.10.730.10:FF:000007">
    <property type="entry name" value="Valine--tRNA ligase"/>
    <property type="match status" value="1"/>
</dbReference>
<dbReference type="FunFam" id="3.40.50.620:FF:000032">
    <property type="entry name" value="Valine--tRNA ligase"/>
    <property type="match status" value="1"/>
</dbReference>
<dbReference type="FunFam" id="3.40.50.620:FF:000146">
    <property type="entry name" value="Valine--tRNA ligase"/>
    <property type="match status" value="1"/>
</dbReference>
<dbReference type="FunFam" id="3.90.740.10:FF:000003">
    <property type="entry name" value="Valine--tRNA ligase"/>
    <property type="match status" value="1"/>
</dbReference>
<dbReference type="FunFam" id="3.90.740.10:FF:000004">
    <property type="entry name" value="Valine--tRNA ligase"/>
    <property type="match status" value="1"/>
</dbReference>
<dbReference type="Gene3D" id="3.40.50.620">
    <property type="entry name" value="HUPs"/>
    <property type="match status" value="2"/>
</dbReference>
<dbReference type="Gene3D" id="1.10.730.10">
    <property type="entry name" value="Isoleucyl-tRNA Synthetase, Domain 1"/>
    <property type="match status" value="1"/>
</dbReference>
<dbReference type="Gene3D" id="1.10.287.380">
    <property type="entry name" value="Valyl-tRNA synthetase, C-terminal domain"/>
    <property type="match status" value="1"/>
</dbReference>
<dbReference type="Gene3D" id="3.90.740.10">
    <property type="entry name" value="Valyl/Leucyl/Isoleucyl-tRNA synthetase, editing domain"/>
    <property type="match status" value="2"/>
</dbReference>
<dbReference type="HAMAP" id="MF_02004">
    <property type="entry name" value="Val_tRNA_synth_type1"/>
    <property type="match status" value="1"/>
</dbReference>
<dbReference type="InterPro" id="IPR001412">
    <property type="entry name" value="aa-tRNA-synth_I_CS"/>
</dbReference>
<dbReference type="InterPro" id="IPR002300">
    <property type="entry name" value="aa-tRNA-synth_Ia"/>
</dbReference>
<dbReference type="InterPro" id="IPR033705">
    <property type="entry name" value="Anticodon_Ia_Val"/>
</dbReference>
<dbReference type="InterPro" id="IPR013155">
    <property type="entry name" value="M/V/L/I-tRNA-synth_anticd-bd"/>
</dbReference>
<dbReference type="InterPro" id="IPR014729">
    <property type="entry name" value="Rossmann-like_a/b/a_fold"/>
</dbReference>
<dbReference type="InterPro" id="IPR010978">
    <property type="entry name" value="tRNA-bd_arm"/>
</dbReference>
<dbReference type="InterPro" id="IPR009080">
    <property type="entry name" value="tRNAsynth_Ia_anticodon-bd"/>
</dbReference>
<dbReference type="InterPro" id="IPR037118">
    <property type="entry name" value="Val-tRNA_synth_C_sf"/>
</dbReference>
<dbReference type="InterPro" id="IPR019499">
    <property type="entry name" value="Val-tRNA_synth_tRNA-bd"/>
</dbReference>
<dbReference type="InterPro" id="IPR009008">
    <property type="entry name" value="Val/Leu/Ile-tRNA-synth_edit"/>
</dbReference>
<dbReference type="InterPro" id="IPR002303">
    <property type="entry name" value="Valyl-tRNA_ligase"/>
</dbReference>
<dbReference type="NCBIfam" id="NF004349">
    <property type="entry name" value="PRK05729.1"/>
    <property type="match status" value="1"/>
</dbReference>
<dbReference type="NCBIfam" id="TIGR00422">
    <property type="entry name" value="valS"/>
    <property type="match status" value="1"/>
</dbReference>
<dbReference type="PANTHER" id="PTHR11946:SF93">
    <property type="entry name" value="VALINE--TRNA LIGASE, CHLOROPLASTIC_MITOCHONDRIAL 2"/>
    <property type="match status" value="1"/>
</dbReference>
<dbReference type="PANTHER" id="PTHR11946">
    <property type="entry name" value="VALYL-TRNA SYNTHETASES"/>
    <property type="match status" value="1"/>
</dbReference>
<dbReference type="Pfam" id="PF08264">
    <property type="entry name" value="Anticodon_1"/>
    <property type="match status" value="1"/>
</dbReference>
<dbReference type="Pfam" id="PF00133">
    <property type="entry name" value="tRNA-synt_1"/>
    <property type="match status" value="1"/>
</dbReference>
<dbReference type="Pfam" id="PF10458">
    <property type="entry name" value="Val_tRNA-synt_C"/>
    <property type="match status" value="1"/>
</dbReference>
<dbReference type="PRINTS" id="PR00986">
    <property type="entry name" value="TRNASYNTHVAL"/>
</dbReference>
<dbReference type="SUPFAM" id="SSF47323">
    <property type="entry name" value="Anticodon-binding domain of a subclass of class I aminoacyl-tRNA synthetases"/>
    <property type="match status" value="1"/>
</dbReference>
<dbReference type="SUPFAM" id="SSF52374">
    <property type="entry name" value="Nucleotidylyl transferase"/>
    <property type="match status" value="1"/>
</dbReference>
<dbReference type="SUPFAM" id="SSF46589">
    <property type="entry name" value="tRNA-binding arm"/>
    <property type="match status" value="1"/>
</dbReference>
<dbReference type="SUPFAM" id="SSF50677">
    <property type="entry name" value="ValRS/IleRS/LeuRS editing domain"/>
    <property type="match status" value="1"/>
</dbReference>
<dbReference type="PROSITE" id="PS00178">
    <property type="entry name" value="AA_TRNA_LIGASE_I"/>
    <property type="match status" value="1"/>
</dbReference>
<gene>
    <name evidence="1" type="primary">valS</name>
    <name type="ordered locus">NTHI1760</name>
</gene>
<name>SYV_HAEI8</name>
<protein>
    <recommendedName>
        <fullName evidence="1">Valine--tRNA ligase</fullName>
        <ecNumber evidence="1">6.1.1.9</ecNumber>
    </recommendedName>
    <alternativeName>
        <fullName evidence="1">Valyl-tRNA synthetase</fullName>
        <shortName evidence="1">ValRS</shortName>
    </alternativeName>
</protein>
<keyword id="KW-0030">Aminoacyl-tRNA synthetase</keyword>
<keyword id="KW-0067">ATP-binding</keyword>
<keyword id="KW-0175">Coiled coil</keyword>
<keyword id="KW-0963">Cytoplasm</keyword>
<keyword id="KW-0436">Ligase</keyword>
<keyword id="KW-0547">Nucleotide-binding</keyword>
<keyword id="KW-0648">Protein biosynthesis</keyword>
<feature type="chain" id="PRO_0000224486" description="Valine--tRNA ligase">
    <location>
        <begin position="1"/>
        <end position="954"/>
    </location>
</feature>
<feature type="coiled-coil region" evidence="1">
    <location>
        <begin position="883"/>
        <end position="953"/>
    </location>
</feature>
<feature type="short sequence motif" description="'HIGH' region">
    <location>
        <begin position="48"/>
        <end position="58"/>
    </location>
</feature>
<feature type="short sequence motif" description="'KMSKS' region">
    <location>
        <begin position="560"/>
        <end position="564"/>
    </location>
</feature>
<feature type="binding site" evidence="1">
    <location>
        <position position="563"/>
    </location>
    <ligand>
        <name>ATP</name>
        <dbReference type="ChEBI" id="CHEBI:30616"/>
    </ligand>
</feature>
<reference key="1">
    <citation type="journal article" date="2005" name="J. Bacteriol.">
        <title>Genomic sequence of an otitis media isolate of nontypeable Haemophilus influenzae: comparative study with H. influenzae serotype d, strain KW20.</title>
        <authorList>
            <person name="Harrison A."/>
            <person name="Dyer D.W."/>
            <person name="Gillaspy A."/>
            <person name="Ray W.C."/>
            <person name="Mungur R."/>
            <person name="Carson M.B."/>
            <person name="Zhong H."/>
            <person name="Gipson J."/>
            <person name="Gipson M."/>
            <person name="Johnson L.S."/>
            <person name="Lewis L."/>
            <person name="Bakaletz L.O."/>
            <person name="Munson R.S. Jr."/>
        </authorList>
    </citation>
    <scope>NUCLEOTIDE SEQUENCE [LARGE SCALE GENOMIC DNA]</scope>
    <source>
        <strain>86-028NP</strain>
    </source>
</reference>
<evidence type="ECO:0000255" key="1">
    <source>
        <dbReference type="HAMAP-Rule" id="MF_02004"/>
    </source>
</evidence>
<accession>Q4QKA4</accession>